<reference key="1">
    <citation type="journal article" date="1994" name="Yeast">
        <title>The sequence of 29.7 kb from the right arm of chromosome II reveals 13 complete open reading frames, of which ten correspond to new genes.</title>
        <authorList>
            <person name="Becam A.-M."/>
            <person name="Cullin C."/>
            <person name="Grzybowska E."/>
            <person name="Lacroute F."/>
            <person name="Nasr F."/>
            <person name="Ozier-Kalogeropoulos O."/>
            <person name="Palucha A."/>
            <person name="Slonimski P.P."/>
            <person name="Zagulski M."/>
            <person name="Herbert C.J."/>
        </authorList>
    </citation>
    <scope>NUCLEOTIDE SEQUENCE [GENOMIC DNA]</scope>
    <source>
        <strain>ATCC 204508 / S288c</strain>
    </source>
</reference>
<reference key="2">
    <citation type="journal article" date="1994" name="EMBO J.">
        <title>Complete DNA sequence of yeast chromosome II.</title>
        <authorList>
            <person name="Feldmann H."/>
            <person name="Aigle M."/>
            <person name="Aljinovic G."/>
            <person name="Andre B."/>
            <person name="Baclet M.C."/>
            <person name="Barthe C."/>
            <person name="Baur A."/>
            <person name="Becam A.-M."/>
            <person name="Biteau N."/>
            <person name="Boles E."/>
            <person name="Brandt T."/>
            <person name="Brendel M."/>
            <person name="Brueckner M."/>
            <person name="Bussereau F."/>
            <person name="Christiansen C."/>
            <person name="Contreras R."/>
            <person name="Crouzet M."/>
            <person name="Cziepluch C."/>
            <person name="Demolis N."/>
            <person name="Delaveau T."/>
            <person name="Doignon F."/>
            <person name="Domdey H."/>
            <person name="Duesterhus S."/>
            <person name="Dubois E."/>
            <person name="Dujon B."/>
            <person name="El Bakkoury M."/>
            <person name="Entian K.-D."/>
            <person name="Feuermann M."/>
            <person name="Fiers W."/>
            <person name="Fobo G.M."/>
            <person name="Fritz C."/>
            <person name="Gassenhuber J."/>
            <person name="Glansdorff N."/>
            <person name="Goffeau A."/>
            <person name="Grivell L.A."/>
            <person name="de Haan M."/>
            <person name="Hein C."/>
            <person name="Herbert C.J."/>
            <person name="Hollenberg C.P."/>
            <person name="Holmstroem K."/>
            <person name="Jacq C."/>
            <person name="Jacquet M."/>
            <person name="Jauniaux J.-C."/>
            <person name="Jonniaux J.-L."/>
            <person name="Kallesoee T."/>
            <person name="Kiesau P."/>
            <person name="Kirchrath L."/>
            <person name="Koetter P."/>
            <person name="Korol S."/>
            <person name="Liebl S."/>
            <person name="Logghe M."/>
            <person name="Lohan A.J.E."/>
            <person name="Louis E.J."/>
            <person name="Li Z.Y."/>
            <person name="Maat M.J."/>
            <person name="Mallet L."/>
            <person name="Mannhaupt G."/>
            <person name="Messenguy F."/>
            <person name="Miosga T."/>
            <person name="Molemans F."/>
            <person name="Mueller S."/>
            <person name="Nasr F."/>
            <person name="Obermaier B."/>
            <person name="Perea J."/>
            <person name="Pierard A."/>
            <person name="Piravandi E."/>
            <person name="Pohl F.M."/>
            <person name="Pohl T.M."/>
            <person name="Potier S."/>
            <person name="Proft M."/>
            <person name="Purnelle B."/>
            <person name="Ramezani Rad M."/>
            <person name="Rieger M."/>
            <person name="Rose M."/>
            <person name="Schaaff-Gerstenschlaeger I."/>
            <person name="Scherens B."/>
            <person name="Schwarzlose C."/>
            <person name="Skala J."/>
            <person name="Slonimski P.P."/>
            <person name="Smits P.H.M."/>
            <person name="Souciet J.-L."/>
            <person name="Steensma H.Y."/>
            <person name="Stucka R."/>
            <person name="Urrestarazu L.A."/>
            <person name="van der Aart Q.J.M."/>
            <person name="Van Dyck L."/>
            <person name="Vassarotti A."/>
            <person name="Vetter I."/>
            <person name="Vierendeels F."/>
            <person name="Vissers S."/>
            <person name="Wagner G."/>
            <person name="de Wergifosse P."/>
            <person name="Wolfe K.H."/>
            <person name="Zagulski M."/>
            <person name="Zimmermann F.K."/>
            <person name="Mewes H.-W."/>
            <person name="Kleine K."/>
        </authorList>
    </citation>
    <scope>NUCLEOTIDE SEQUENCE [LARGE SCALE GENOMIC DNA]</scope>
    <source>
        <strain>ATCC 204508 / S288c</strain>
    </source>
</reference>
<reference key="3">
    <citation type="journal article" date="2014" name="G3 (Bethesda)">
        <title>The reference genome sequence of Saccharomyces cerevisiae: Then and now.</title>
        <authorList>
            <person name="Engel S.R."/>
            <person name="Dietrich F.S."/>
            <person name="Fisk D.G."/>
            <person name="Binkley G."/>
            <person name="Balakrishnan R."/>
            <person name="Costanzo M.C."/>
            <person name="Dwight S.S."/>
            <person name="Hitz B.C."/>
            <person name="Karra K."/>
            <person name="Nash R.S."/>
            <person name="Weng S."/>
            <person name="Wong E.D."/>
            <person name="Lloyd P."/>
            <person name="Skrzypek M.S."/>
            <person name="Miyasato S.R."/>
            <person name="Simison M."/>
            <person name="Cherry J.M."/>
        </authorList>
    </citation>
    <scope>GENOME REANNOTATION</scope>
    <source>
        <strain>ATCC 204508 / S288c</strain>
    </source>
</reference>
<reference key="4">
    <citation type="journal article" date="1998" name="Mol. Cell">
        <title>Localization of ASH1 mRNA particles in living yeast.</title>
        <authorList>
            <person name="Bertrand E."/>
            <person name="Chartrand P."/>
            <person name="Schaefer M."/>
            <person name="Shenoy S.M."/>
            <person name="Singer R.H."/>
            <person name="Long R.M."/>
        </authorList>
    </citation>
    <scope>FUNCTION</scope>
</reference>
<reference key="5">
    <citation type="journal article" date="1999" name="Curr. Biol.">
        <title>Localization and anchoring of mRNA in budding yeast.</title>
        <authorList>
            <person name="Beach D.L."/>
            <person name="Salmon E.D."/>
            <person name="Bloom K."/>
        </authorList>
    </citation>
    <scope>FUNCTION</scope>
</reference>
<reference key="6">
    <citation type="journal article" date="1999" name="J. Cell Sci.">
        <title>Association of the class V myosin Myo4p with a localised messenger RNA in budding yeast depends on She proteins.</title>
        <authorList>
            <person name="Munchow S."/>
            <person name="Sauter C."/>
            <person name="Jansen R.P."/>
        </authorList>
    </citation>
    <scope>FUNCTION</scope>
</reference>
<reference key="7">
    <citation type="journal article" date="2000" name="EMBO J.">
        <title>She2p, a novel RNA-binding protein tethers ASH1 mRNA to the Myo4p myosin motor via She3p.</title>
        <authorList>
            <person name="Bohl F."/>
            <person name="Kruse C."/>
            <person name="Frank A."/>
            <person name="Ferring D."/>
            <person name="Jansen R.P."/>
        </authorList>
    </citation>
    <scope>FUNCTION</scope>
    <scope>INTERACTION WITH SHE2 AND MYO4</scope>
</reference>
<reference key="8">
    <citation type="journal article" date="2000" name="EMBO J.">
        <title>She2p is a novel RNA-binding protein that recruits the Myo4p-She3p complex to ASH1 mRNA.</title>
        <authorList>
            <person name="Long R.M."/>
            <person name="Gu W."/>
            <person name="Lorimer E."/>
            <person name="Singer R.H."/>
            <person name="Chartrand P."/>
        </authorList>
    </citation>
    <scope>FUNCTION</scope>
    <scope>RNA-BINDING</scope>
    <scope>INTERACTION WITH SHE2</scope>
</reference>
<reference key="9">
    <citation type="journal article" date="2000" name="Proc. Natl. Acad. Sci. U.S.A.">
        <title>The myosin motor, Myo4p, binds Ash1 mRNA via the adapter protein, She3p.</title>
        <authorList>
            <person name="Takizawa P.A."/>
            <person name="Vale R.D."/>
        </authorList>
    </citation>
    <scope>RNA-BINDING</scope>
    <scope>INTERACTION WITH MYO4</scope>
</reference>
<reference key="10">
    <citation type="journal article" date="2002" name="J. Cell Biol.">
        <title>Ribonucleoprotein-dependent localization of the yeast class V myosin Myo4p.</title>
        <authorList>
            <person name="Kruse C."/>
            <person name="Jaedicke A."/>
            <person name="Beaudouin J."/>
            <person name="Bohl F."/>
            <person name="Ferring D."/>
            <person name="Guttler T."/>
            <person name="Ellenberg J."/>
            <person name="Jansen R.P."/>
        </authorList>
    </citation>
    <scope>FUNCTION</scope>
</reference>
<reference key="11">
    <citation type="journal article" date="2003" name="J. Cell Biol.">
        <title>Myo4p and She3p are required for cortical ER inheritance in Saccharomyces cerevisiae.</title>
        <authorList>
            <person name="Estrada P."/>
            <person name="Kim J."/>
            <person name="Coleman J."/>
            <person name="Walker L."/>
            <person name="Dunn B."/>
            <person name="Takizawa P."/>
            <person name="Novick P."/>
            <person name="Ferro-Novick S."/>
        </authorList>
    </citation>
    <scope>FUNCTION</scope>
    <scope>SUBCELLULAR LOCATION</scope>
</reference>
<reference key="12">
    <citation type="journal article" date="2003" name="Nature">
        <title>Global analysis of protein expression in yeast.</title>
        <authorList>
            <person name="Ghaemmaghami S."/>
            <person name="Huh W.-K."/>
            <person name="Bower K."/>
            <person name="Howson R.W."/>
            <person name="Belle A."/>
            <person name="Dephoure N."/>
            <person name="O'Shea E.K."/>
            <person name="Weissman J.S."/>
        </authorList>
    </citation>
    <scope>LEVEL OF PROTEIN EXPRESSION [LARGE SCALE ANALYSIS]</scope>
</reference>
<reference key="13">
    <citation type="journal article" date="2003" name="RNA">
        <title>RNA-protein interactions promote asymmetric sorting of the ASH1 mRNA ribonucleoprotein complex.</title>
        <authorList>
            <person name="Gonsalvez G.B."/>
            <person name="Lehmann K.A."/>
            <person name="Ho D.K."/>
            <person name="Stanitsa E.S."/>
            <person name="Williamson J.R."/>
            <person name="Long R.M."/>
        </authorList>
    </citation>
    <scope>FUNCTION</scope>
    <scope>SUBCELLULAR LOCATION</scope>
    <scope>INTERACTION WITH SHE2</scope>
</reference>
<reference key="14">
    <citation type="journal article" date="2004" name="J. Biol. Chem.">
        <title>ASH1 mRNA anchoring requires reorganization of the Myo4p-She3p-She2p transport complex.</title>
        <authorList>
            <person name="Gonsalvez G.B."/>
            <person name="Little J.L."/>
            <person name="Long R.M."/>
        </authorList>
    </citation>
    <scope>FUNCTION</scope>
</reference>
<reference key="15">
    <citation type="journal article" date="2006" name="Curr. Biol.">
        <title>Coordination of endoplasmic reticulum and mRNA localization to the yeast bud.</title>
        <authorList>
            <person name="Schmid M."/>
            <person name="Jaedicke A."/>
            <person name="Du T.G."/>
            <person name="Jansen R.P."/>
        </authorList>
    </citation>
    <scope>FUNCTION</scope>
</reference>
<reference key="16">
    <citation type="journal article" date="2007" name="J. Proteome Res.">
        <title>Large-scale phosphorylation analysis of alpha-factor-arrested Saccharomyces cerevisiae.</title>
        <authorList>
            <person name="Li X."/>
            <person name="Gerber S.A."/>
            <person name="Rudner A.D."/>
            <person name="Beausoleil S.A."/>
            <person name="Haas W."/>
            <person name="Villen J."/>
            <person name="Elias J.E."/>
            <person name="Gygi S.P."/>
        </authorList>
    </citation>
    <scope>PHOSPHORYLATION [LARGE SCALE ANALYSIS] AT SER-343</scope>
    <scope>IDENTIFICATION BY MASS SPECTROMETRY [LARGE SCALE ANALYSIS]</scope>
    <source>
        <strain>ADR376</strain>
    </source>
</reference>
<reference key="17">
    <citation type="journal article" date="2007" name="Proc. Natl. Acad. Sci. U.S.A.">
        <title>Analysis of phosphorylation sites on proteins from Saccharomyces cerevisiae by electron transfer dissociation (ETD) mass spectrometry.</title>
        <authorList>
            <person name="Chi A."/>
            <person name="Huttenhower C."/>
            <person name="Geer L.Y."/>
            <person name="Coon J.J."/>
            <person name="Syka J.E.P."/>
            <person name="Bai D.L."/>
            <person name="Shabanowitz J."/>
            <person name="Burke D.J."/>
            <person name="Troyanskaya O.G."/>
            <person name="Hunt D.F."/>
        </authorList>
    </citation>
    <scope>IDENTIFICATION BY MASS SPECTROMETRY [LARGE SCALE ANALYSIS]</scope>
</reference>
<reference key="18">
    <citation type="journal article" date="2008" name="Mol. Cell. Proteomics">
        <title>A multidimensional chromatography technology for in-depth phosphoproteome analysis.</title>
        <authorList>
            <person name="Albuquerque C.P."/>
            <person name="Smolka M.B."/>
            <person name="Payne S.H."/>
            <person name="Bafna V."/>
            <person name="Eng J."/>
            <person name="Zhou H."/>
        </authorList>
    </citation>
    <scope>PHOSPHORYLATION [LARGE SCALE ANALYSIS] AT SER-394</scope>
    <scope>IDENTIFICATION BY MASS SPECTROMETRY [LARGE SCALE ANALYSIS]</scope>
</reference>
<reference key="19">
    <citation type="journal article" date="2009" name="Eukaryot. Cell">
        <title>She3p possesses a novel activity required for ASH1 mRNA localization in Saccharomyces cerevisiae.</title>
        <authorList>
            <person name="Landers S.M."/>
            <person name="Gallas M.R."/>
            <person name="Little J."/>
            <person name="Long R.M."/>
        </authorList>
    </citation>
    <scope>FUNCTION</scope>
    <scope>PHOSPHORYLATION</scope>
    <scope>MUTAGENESIS OF SER-343; SER-348 AND SER-361</scope>
</reference>
<reference key="20">
    <citation type="journal article" date="2009" name="Science">
        <title>Global analysis of Cdk1 substrate phosphorylation sites provides insights into evolution.</title>
        <authorList>
            <person name="Holt L.J."/>
            <person name="Tuch B.B."/>
            <person name="Villen J."/>
            <person name="Johnson A.D."/>
            <person name="Gygi S.P."/>
            <person name="Morgan D.O."/>
        </authorList>
    </citation>
    <scope>PHOSPHORYLATION [LARGE SCALE ANALYSIS] AT SER-394</scope>
    <scope>IDENTIFICATION BY MASS SPECTROMETRY [LARGE SCALE ANALYSIS]</scope>
</reference>
<reference key="21">
    <citation type="journal article" date="2010" name="J. Cell Biol.">
        <title>The structure of the Myo4p globular tail and its function in ASH1 mRNA localization.</title>
        <authorList>
            <person name="Heuck A."/>
            <person name="Fetka I."/>
            <person name="Brewer D.N."/>
            <person name="Huls D."/>
            <person name="Munson M."/>
            <person name="Jansen R.P."/>
            <person name="Niessing D."/>
        </authorList>
    </citation>
    <scope>INTERACTION WITH MYO4</scope>
</reference>
<evidence type="ECO:0000255" key="1"/>
<evidence type="ECO:0000256" key="2">
    <source>
        <dbReference type="SAM" id="MobiDB-lite"/>
    </source>
</evidence>
<evidence type="ECO:0000269" key="3">
    <source>
    </source>
</evidence>
<evidence type="ECO:0000269" key="4">
    <source>
    </source>
</evidence>
<evidence type="ECO:0000269" key="5">
    <source>
    </source>
</evidence>
<evidence type="ECO:0000269" key="6">
    <source>
    </source>
</evidence>
<evidence type="ECO:0000269" key="7">
    <source>
    </source>
</evidence>
<evidence type="ECO:0000269" key="8">
    <source>
    </source>
</evidence>
<evidence type="ECO:0000269" key="9">
    <source>
    </source>
</evidence>
<evidence type="ECO:0000269" key="10">
    <source>
    </source>
</evidence>
<evidence type="ECO:0000269" key="11">
    <source>
    </source>
</evidence>
<evidence type="ECO:0000269" key="12">
    <source>
    </source>
</evidence>
<evidence type="ECO:0000269" key="13">
    <source>
    </source>
</evidence>
<evidence type="ECO:0000269" key="14">
    <source>
    </source>
</evidence>
<evidence type="ECO:0000269" key="15">
    <source>
    </source>
</evidence>
<evidence type="ECO:0000269" key="16">
    <source>
    </source>
</evidence>
<evidence type="ECO:0000305" key="17"/>
<evidence type="ECO:0007744" key="18">
    <source>
    </source>
</evidence>
<evidence type="ECO:0007744" key="19">
    <source>
    </source>
</evidence>
<evidence type="ECO:0007744" key="20">
    <source>
    </source>
</evidence>
<evidence type="ECO:0007829" key="21">
    <source>
        <dbReference type="PDB" id="4LL7"/>
    </source>
</evidence>
<evidence type="ECO:0007829" key="22">
    <source>
        <dbReference type="PDB" id="5M0J"/>
    </source>
</evidence>
<organism>
    <name type="scientific">Saccharomyces cerevisiae (strain ATCC 204508 / S288c)</name>
    <name type="common">Baker's yeast</name>
    <dbReference type="NCBI Taxonomy" id="559292"/>
    <lineage>
        <taxon>Eukaryota</taxon>
        <taxon>Fungi</taxon>
        <taxon>Dikarya</taxon>
        <taxon>Ascomycota</taxon>
        <taxon>Saccharomycotina</taxon>
        <taxon>Saccharomycetes</taxon>
        <taxon>Saccharomycetales</taxon>
        <taxon>Saccharomycetaceae</taxon>
        <taxon>Saccharomyces</taxon>
    </lineage>
</organism>
<protein>
    <recommendedName>
        <fullName>SWI5-dependent HO expression protein 3</fullName>
    </recommendedName>
</protein>
<name>SHE3_YEAST</name>
<feature type="chain" id="PRO_0000202490" description="SWI5-dependent HO expression protein 3">
    <location>
        <begin position="1"/>
        <end position="425"/>
    </location>
</feature>
<feature type="region of interest" description="Disordered" evidence="2">
    <location>
        <begin position="24"/>
        <end position="45"/>
    </location>
</feature>
<feature type="region of interest" description="Disordered" evidence="2">
    <location>
        <begin position="322"/>
        <end position="425"/>
    </location>
</feature>
<feature type="coiled-coil region" evidence="1">
    <location>
        <begin position="68"/>
        <end position="197"/>
    </location>
</feature>
<feature type="compositionally biased region" description="Polar residues" evidence="2">
    <location>
        <begin position="35"/>
        <end position="45"/>
    </location>
</feature>
<feature type="compositionally biased region" description="Low complexity" evidence="2">
    <location>
        <begin position="326"/>
        <end position="338"/>
    </location>
</feature>
<feature type="compositionally biased region" description="Polar residues" evidence="2">
    <location>
        <begin position="345"/>
        <end position="358"/>
    </location>
</feature>
<feature type="compositionally biased region" description="Polar residues" evidence="2">
    <location>
        <begin position="382"/>
        <end position="397"/>
    </location>
</feature>
<feature type="modified residue" description="Phosphoserine" evidence="18">
    <location>
        <position position="343"/>
    </location>
</feature>
<feature type="modified residue" description="Phosphoserine" evidence="19 20">
    <location>
        <position position="394"/>
    </location>
</feature>
<feature type="mutagenesis site" description="Prevents correct localization of ASH1 mRNA; when associated with E-361." evidence="14">
    <original>S</original>
    <variation>E</variation>
    <location>
        <position position="343"/>
    </location>
</feature>
<feature type="mutagenesis site" description="Prevents correct localization of ASH1 mRNA." evidence="14">
    <original>S</original>
    <variation>E</variation>
    <location>
        <position position="348"/>
    </location>
</feature>
<feature type="mutagenesis site" description="Prevents correct localization of ASH1 mRNA; when associated with E-343." evidence="14">
    <original>S</original>
    <variation>E</variation>
    <location>
        <position position="361"/>
    </location>
</feature>
<feature type="helix" evidence="21">
    <location>
        <begin position="44"/>
        <end position="71"/>
    </location>
</feature>
<feature type="helix" evidence="21">
    <location>
        <begin position="74"/>
        <end position="134"/>
    </location>
</feature>
<feature type="helix" evidence="22">
    <location>
        <begin position="339"/>
        <end position="342"/>
    </location>
</feature>
<feature type="turn" evidence="22">
    <location>
        <begin position="343"/>
        <end position="345"/>
    </location>
</feature>
<feature type="strand" evidence="22">
    <location>
        <begin position="347"/>
        <end position="349"/>
    </location>
</feature>
<proteinExistence type="evidence at protein level"/>
<gene>
    <name type="primary">SHE3</name>
    <name type="ordered locus">YBR130C</name>
    <name type="ORF">YBR1005</name>
</gene>
<dbReference type="EMBL" id="X75891">
    <property type="protein sequence ID" value="CAA53489.1"/>
    <property type="molecule type" value="Genomic_DNA"/>
</dbReference>
<dbReference type="EMBL" id="Z35999">
    <property type="protein sequence ID" value="CAA85087.1"/>
    <property type="molecule type" value="Genomic_DNA"/>
</dbReference>
<dbReference type="EMBL" id="BK006936">
    <property type="protein sequence ID" value="DAA07247.1"/>
    <property type="molecule type" value="Genomic_DNA"/>
</dbReference>
<dbReference type="PIR" id="S45999">
    <property type="entry name" value="S45999"/>
</dbReference>
<dbReference type="RefSeq" id="NP_009688.3">
    <property type="nucleotide sequence ID" value="NM_001178478.3"/>
</dbReference>
<dbReference type="PDB" id="4LL7">
    <property type="method" value="X-ray"/>
    <property type="resolution" value="2.31 A"/>
    <property type="chains" value="A/B/C/D/E/F/G/H=42-137"/>
</dbReference>
<dbReference type="PDB" id="4LL8">
    <property type="method" value="X-ray"/>
    <property type="resolution" value="3.58 A"/>
    <property type="chains" value="B/E=81-311"/>
</dbReference>
<dbReference type="PDB" id="4WNL">
    <property type="method" value="X-ray"/>
    <property type="resolution" value="2.80 A"/>
    <property type="chains" value="E/F/G/H=342-374"/>
</dbReference>
<dbReference type="PDB" id="5M0I">
    <property type="method" value="X-ray"/>
    <property type="resolution" value="2.41 A"/>
    <property type="chains" value="H/I/J=382-405"/>
</dbReference>
<dbReference type="PDB" id="5M0J">
    <property type="method" value="X-ray"/>
    <property type="resolution" value="2.80 A"/>
    <property type="chains" value="A/B/C/D/G/H/I/J=331-405"/>
</dbReference>
<dbReference type="PDBsum" id="4LL7"/>
<dbReference type="PDBsum" id="4LL8"/>
<dbReference type="PDBsum" id="4WNL"/>
<dbReference type="PDBsum" id="5M0I"/>
<dbReference type="PDBsum" id="5M0J"/>
<dbReference type="SMR" id="P38272"/>
<dbReference type="BioGRID" id="32831">
    <property type="interactions" value="114"/>
</dbReference>
<dbReference type="DIP" id="DIP-2037N"/>
<dbReference type="FunCoup" id="P38272">
    <property type="interactions" value="1726"/>
</dbReference>
<dbReference type="IntAct" id="P38272">
    <property type="interactions" value="28"/>
</dbReference>
<dbReference type="MINT" id="P38272"/>
<dbReference type="STRING" id="4932.YBR130C"/>
<dbReference type="iPTMnet" id="P38272"/>
<dbReference type="PaxDb" id="4932-YBR130C"/>
<dbReference type="PeptideAtlas" id="P38272"/>
<dbReference type="EnsemblFungi" id="YBR130C_mRNA">
    <property type="protein sequence ID" value="YBR130C"/>
    <property type="gene ID" value="YBR130C"/>
</dbReference>
<dbReference type="GeneID" id="852427"/>
<dbReference type="KEGG" id="sce:YBR130C"/>
<dbReference type="AGR" id="SGD:S000000334"/>
<dbReference type="SGD" id="S000000334">
    <property type="gene designation" value="SHE3"/>
</dbReference>
<dbReference type="VEuPathDB" id="FungiDB:YBR130C"/>
<dbReference type="eggNOG" id="ENOG502QSQX">
    <property type="taxonomic scope" value="Eukaryota"/>
</dbReference>
<dbReference type="HOGENOM" id="CLU_038734_0_0_1"/>
<dbReference type="InParanoid" id="P38272"/>
<dbReference type="OMA" id="HFMANIN"/>
<dbReference type="OrthoDB" id="6088208at2759"/>
<dbReference type="BioCyc" id="YEAST:G3O-29085-MONOMER"/>
<dbReference type="BioGRID-ORCS" id="852427">
    <property type="hits" value="1 hit in 10 CRISPR screens"/>
</dbReference>
<dbReference type="PRO" id="PR:P38272"/>
<dbReference type="Proteomes" id="UP000002311">
    <property type="component" value="Chromosome II"/>
</dbReference>
<dbReference type="RNAct" id="P38272">
    <property type="molecule type" value="protein"/>
</dbReference>
<dbReference type="GO" id="GO:0005934">
    <property type="term" value="C:cellular bud tip"/>
    <property type="evidence" value="ECO:0000314"/>
    <property type="project" value="SGD"/>
</dbReference>
<dbReference type="GO" id="GO:0005737">
    <property type="term" value="C:cytoplasm"/>
    <property type="evidence" value="ECO:0007005"/>
    <property type="project" value="SGD"/>
</dbReference>
<dbReference type="GO" id="GO:0005789">
    <property type="term" value="C:endoplasmic reticulum membrane"/>
    <property type="evidence" value="ECO:0007669"/>
    <property type="project" value="UniProtKB-SubCell"/>
</dbReference>
<dbReference type="GO" id="GO:0003729">
    <property type="term" value="F:mRNA binding"/>
    <property type="evidence" value="ECO:0000314"/>
    <property type="project" value="SGD"/>
</dbReference>
<dbReference type="GO" id="GO:1990825">
    <property type="term" value="F:sequence-specific mRNA binding"/>
    <property type="evidence" value="ECO:0000314"/>
    <property type="project" value="SGD"/>
</dbReference>
<dbReference type="GO" id="GO:0048309">
    <property type="term" value="P:endoplasmic reticulum inheritance"/>
    <property type="evidence" value="ECO:0000315"/>
    <property type="project" value="SGD"/>
</dbReference>
<dbReference type="GO" id="GO:0008298">
    <property type="term" value="P:intracellular mRNA localization"/>
    <property type="evidence" value="ECO:0000315"/>
    <property type="project" value="SGD"/>
</dbReference>
<dbReference type="GO" id="GO:0007533">
    <property type="term" value="P:mating type switching"/>
    <property type="evidence" value="ECO:0000315"/>
    <property type="project" value="SGD"/>
</dbReference>
<dbReference type="GO" id="GO:0051028">
    <property type="term" value="P:mRNA transport"/>
    <property type="evidence" value="ECO:0007669"/>
    <property type="project" value="UniProtKB-KW"/>
</dbReference>
<dbReference type="InterPro" id="IPR031398">
    <property type="entry name" value="She3"/>
</dbReference>
<dbReference type="Pfam" id="PF17078">
    <property type="entry name" value="SHE3"/>
    <property type="match status" value="1"/>
</dbReference>
<comment type="function">
    <text evidence="3 4 6 7 8 9 11 12 13 14 16">RNA-binding protein that binds specific mRNAs including the ASH1 mRNA, coding for a repressor of the HO endonuclease. Part of the mRNA localization machinery that restricts accumulation of certain proteins to the bud and in the daughter cell. Required for the delivery of cortical endoplasmic reticulum into the emerging bud.</text>
</comment>
<comment type="subunit">
    <text evidence="5 6 7 9 15">Interacts with SHE2 and MYO4.</text>
</comment>
<comment type="interaction">
    <interactant intactId="EBI-21600">
        <id>P38272</id>
    </interactant>
    <interactant intactId="EBI-11681">
        <id>P32492</id>
        <label>MYO4</label>
    </interactant>
    <organismsDiffer>false</organismsDiffer>
    <experiments>11</experiments>
</comment>
<comment type="interaction">
    <interactant intactId="EBI-21600">
        <id>P38272</id>
    </interactant>
    <interactant intactId="EBI-26866">
        <id>P36068</id>
        <label>SHE2</label>
    </interactant>
    <organismsDiffer>false</organismsDiffer>
    <experiments>12</experiments>
</comment>
<comment type="subcellular location">
    <subcellularLocation>
        <location evidence="9 11">Endoplasmic reticulum membrane</location>
        <topology evidence="9 11">Peripheral membrane protein</topology>
    </subcellularLocation>
</comment>
<comment type="miscellaneous">
    <text evidence="10">Present with 1010 molecules/cell in log phase SD medium.</text>
</comment>
<comment type="similarity">
    <text evidence="17">Belongs to the SHE3 family.</text>
</comment>
<sequence length="425" mass="47417">MSDQDNTQTSSSKLAPHHNIFMANLESSPTKDRNTSSQNASSSRVIESLHDQIDMLTKTNLQLTTQSQNLLSKLELAQSKESKLLENLNLLKNENENLNSIFERKNKKLKELEKDYSELSNRYNEQKEKMDQLSKLAKNSSAIEQSCSEKLQNMEVNYNSLLESQNLYRDHYSDEISKLNEKIGLLELELSNQNLNYGSDTSSNSDIELNLNKFNDSVKDLKSLETEKDSKLSKIITHSLDELNLQSWLNLYQTNENLISTFAEKMDLKDVLKRNDEKISNKGAVVQTLKKNVQTQVESNNADALSSNNAQDMLPIKMVKLRKTPNTNDSSSNGNSSNNKRRSFYTASPLLSSGSIPKSASPVLPGVKRTASVRKPSSSSSKTNVTHNNDPSTSPTISVPPGVTRTVSSTHKKKGNSMVVHGAQS</sequence>
<accession>P38272</accession>
<accession>D6VQC7</accession>
<keyword id="KW-0002">3D-structure</keyword>
<keyword id="KW-0175">Coiled coil</keyword>
<keyword id="KW-0256">Endoplasmic reticulum</keyword>
<keyword id="KW-0472">Membrane</keyword>
<keyword id="KW-0509">mRNA transport</keyword>
<keyword id="KW-0597">Phosphoprotein</keyword>
<keyword id="KW-1185">Reference proteome</keyword>
<keyword id="KW-0694">RNA-binding</keyword>
<keyword id="KW-0813">Transport</keyword>